<evidence type="ECO:0000255" key="1">
    <source>
        <dbReference type="HAMAP-Rule" id="MF_00651"/>
    </source>
</evidence>
<comment type="function">
    <text evidence="1">Could be a nuclease involved in processing of the 5'-end of pre-16S rRNA.</text>
</comment>
<comment type="subcellular location">
    <subcellularLocation>
        <location evidence="1">Cytoplasm</location>
    </subcellularLocation>
</comment>
<comment type="similarity">
    <text evidence="1">Belongs to the YqgF nuclease family.</text>
</comment>
<proteinExistence type="inferred from homology"/>
<keyword id="KW-0963">Cytoplasm</keyword>
<keyword id="KW-0378">Hydrolase</keyword>
<keyword id="KW-0540">Nuclease</keyword>
<keyword id="KW-1185">Reference proteome</keyword>
<keyword id="KW-0690">Ribosome biogenesis</keyword>
<gene>
    <name type="ordered locus">Tbd_2580</name>
</gene>
<sequence length="145" mass="15697">MSDAQTHGTVLAFDLGLKRTGVASGELAIGIAHPLTVIQAESTDARMAAIEKLAAEWQPALFVLGLPTRADGSENEMTRVARNFARRLESRFERPVFLIDERLTSATAESELHARGIHGKKNKALTDAVAAQLILQGFFDARLTA</sequence>
<feature type="chain" id="PRO_0000257612" description="Putative pre-16S rRNA nuclease">
    <location>
        <begin position="1"/>
        <end position="145"/>
    </location>
</feature>
<organism>
    <name type="scientific">Thiobacillus denitrificans (strain ATCC 25259 / T1)</name>
    <dbReference type="NCBI Taxonomy" id="292415"/>
    <lineage>
        <taxon>Bacteria</taxon>
        <taxon>Pseudomonadati</taxon>
        <taxon>Pseudomonadota</taxon>
        <taxon>Betaproteobacteria</taxon>
        <taxon>Nitrosomonadales</taxon>
        <taxon>Thiobacillaceae</taxon>
        <taxon>Thiobacillus</taxon>
    </lineage>
</organism>
<accession>Q3SFS3</accession>
<protein>
    <recommendedName>
        <fullName evidence="1">Putative pre-16S rRNA nuclease</fullName>
        <ecNumber evidence="1">3.1.-.-</ecNumber>
    </recommendedName>
</protein>
<name>YQGF_THIDA</name>
<dbReference type="EC" id="3.1.-.-" evidence="1"/>
<dbReference type="EMBL" id="CP000116">
    <property type="protein sequence ID" value="AAZ98533.1"/>
    <property type="molecule type" value="Genomic_DNA"/>
</dbReference>
<dbReference type="RefSeq" id="WP_011313092.1">
    <property type="nucleotide sequence ID" value="NC_007404.1"/>
</dbReference>
<dbReference type="SMR" id="Q3SFS3"/>
<dbReference type="STRING" id="292415.Tbd_2580"/>
<dbReference type="KEGG" id="tbd:Tbd_2580"/>
<dbReference type="eggNOG" id="COG0816">
    <property type="taxonomic scope" value="Bacteria"/>
</dbReference>
<dbReference type="HOGENOM" id="CLU_098240_3_2_4"/>
<dbReference type="OrthoDB" id="9796140at2"/>
<dbReference type="Proteomes" id="UP000008291">
    <property type="component" value="Chromosome"/>
</dbReference>
<dbReference type="GO" id="GO:0005829">
    <property type="term" value="C:cytosol"/>
    <property type="evidence" value="ECO:0007669"/>
    <property type="project" value="TreeGrafter"/>
</dbReference>
<dbReference type="GO" id="GO:0004518">
    <property type="term" value="F:nuclease activity"/>
    <property type="evidence" value="ECO:0007669"/>
    <property type="project" value="UniProtKB-KW"/>
</dbReference>
<dbReference type="GO" id="GO:0000967">
    <property type="term" value="P:rRNA 5'-end processing"/>
    <property type="evidence" value="ECO:0007669"/>
    <property type="project" value="UniProtKB-UniRule"/>
</dbReference>
<dbReference type="CDD" id="cd16964">
    <property type="entry name" value="YqgF"/>
    <property type="match status" value="1"/>
</dbReference>
<dbReference type="Gene3D" id="3.30.420.140">
    <property type="entry name" value="YqgF/RNase H-like domain"/>
    <property type="match status" value="1"/>
</dbReference>
<dbReference type="HAMAP" id="MF_00651">
    <property type="entry name" value="Nuclease_YqgF"/>
    <property type="match status" value="1"/>
</dbReference>
<dbReference type="InterPro" id="IPR012337">
    <property type="entry name" value="RNaseH-like_sf"/>
</dbReference>
<dbReference type="InterPro" id="IPR005227">
    <property type="entry name" value="YqgF"/>
</dbReference>
<dbReference type="InterPro" id="IPR006641">
    <property type="entry name" value="YqgF/RNaseH-like_dom"/>
</dbReference>
<dbReference type="InterPro" id="IPR037027">
    <property type="entry name" value="YqgF/RNaseH-like_dom_sf"/>
</dbReference>
<dbReference type="NCBIfam" id="TIGR00250">
    <property type="entry name" value="RNAse_H_YqgF"/>
    <property type="match status" value="1"/>
</dbReference>
<dbReference type="PANTHER" id="PTHR33317">
    <property type="entry name" value="POLYNUCLEOTIDYL TRANSFERASE, RIBONUCLEASE H-LIKE SUPERFAMILY PROTEIN"/>
    <property type="match status" value="1"/>
</dbReference>
<dbReference type="PANTHER" id="PTHR33317:SF4">
    <property type="entry name" value="POLYNUCLEOTIDYL TRANSFERASE, RIBONUCLEASE H-LIKE SUPERFAMILY PROTEIN"/>
    <property type="match status" value="1"/>
</dbReference>
<dbReference type="Pfam" id="PF03652">
    <property type="entry name" value="RuvX"/>
    <property type="match status" value="1"/>
</dbReference>
<dbReference type="SMART" id="SM00732">
    <property type="entry name" value="YqgFc"/>
    <property type="match status" value="1"/>
</dbReference>
<dbReference type="SUPFAM" id="SSF53098">
    <property type="entry name" value="Ribonuclease H-like"/>
    <property type="match status" value="1"/>
</dbReference>
<reference key="1">
    <citation type="journal article" date="2006" name="J. Bacteriol.">
        <title>The genome sequence of the obligately chemolithoautotrophic, facultatively anaerobic bacterium Thiobacillus denitrificans.</title>
        <authorList>
            <person name="Beller H.R."/>
            <person name="Chain P.S."/>
            <person name="Letain T.E."/>
            <person name="Chakicherla A."/>
            <person name="Larimer F.W."/>
            <person name="Richardson P.M."/>
            <person name="Coleman M.A."/>
            <person name="Wood A.P."/>
            <person name="Kelly D.P."/>
        </authorList>
    </citation>
    <scope>NUCLEOTIDE SEQUENCE [LARGE SCALE GENOMIC DNA]</scope>
    <source>
        <strain>ATCC 25259 / T1</strain>
    </source>
</reference>